<sequence length="270" mass="29556">MTMSFAANRARGEIRVRYEKHGGITRPLRLFETGGLRLRHPRAFQGCVGMIVNSAGGIAGGDHLRLAIEAEEQSELVIATPAAEKIYRARDKAAMLDLSLVLAPETKLAFLPQETILFDGAALSRRLDVTMANDASLLLVETLVLGRLAHGESAISCDFRDSWRIRRGGRLVFAEESRIEGPLNRTFDQPSLGHGRRAMAFLLAVAPDAEARLESLRARLAPFEPACPHGVSAWNGMLVARLMAASPEVLRCALLAGLGLWRDDIARLWL</sequence>
<keyword id="KW-0143">Chaperone</keyword>
<keyword id="KW-0963">Cytoplasm</keyword>
<keyword id="KW-0996">Nickel insertion</keyword>
<keyword id="KW-1185">Reference proteome</keyword>
<feature type="chain" id="PRO_0000346553" description="Urease accessory protein UreD">
    <location>
        <begin position="1"/>
        <end position="270"/>
    </location>
</feature>
<accession>B2IDT5</accession>
<comment type="function">
    <text evidence="1">Required for maturation of urease via the functional incorporation of the urease nickel metallocenter.</text>
</comment>
<comment type="subunit">
    <text evidence="1">UreD, UreF and UreG form a complex that acts as a GTP-hydrolysis-dependent molecular chaperone, activating the urease apoprotein by helping to assemble the nickel containing metallocenter of UreC. The UreE protein probably delivers the nickel.</text>
</comment>
<comment type="subcellular location">
    <subcellularLocation>
        <location evidence="1">Cytoplasm</location>
    </subcellularLocation>
</comment>
<comment type="similarity">
    <text evidence="1">Belongs to the UreD family.</text>
</comment>
<organism>
    <name type="scientific">Beijerinckia indica subsp. indica (strain ATCC 9039 / DSM 1715 / NCIMB 8712)</name>
    <dbReference type="NCBI Taxonomy" id="395963"/>
    <lineage>
        <taxon>Bacteria</taxon>
        <taxon>Pseudomonadati</taxon>
        <taxon>Pseudomonadota</taxon>
        <taxon>Alphaproteobacteria</taxon>
        <taxon>Hyphomicrobiales</taxon>
        <taxon>Beijerinckiaceae</taxon>
        <taxon>Beijerinckia</taxon>
    </lineage>
</organism>
<evidence type="ECO:0000255" key="1">
    <source>
        <dbReference type="HAMAP-Rule" id="MF_01384"/>
    </source>
</evidence>
<dbReference type="EMBL" id="CP001016">
    <property type="protein sequence ID" value="ACB96867.1"/>
    <property type="molecule type" value="Genomic_DNA"/>
</dbReference>
<dbReference type="RefSeq" id="WP_012386215.1">
    <property type="nucleotide sequence ID" value="NC_010581.1"/>
</dbReference>
<dbReference type="SMR" id="B2IDT5"/>
<dbReference type="STRING" id="395963.Bind_3308"/>
<dbReference type="KEGG" id="bid:Bind_3308"/>
<dbReference type="eggNOG" id="COG0829">
    <property type="taxonomic scope" value="Bacteria"/>
</dbReference>
<dbReference type="HOGENOM" id="CLU_056339_0_0_5"/>
<dbReference type="OrthoDB" id="9798842at2"/>
<dbReference type="Proteomes" id="UP000001695">
    <property type="component" value="Chromosome"/>
</dbReference>
<dbReference type="GO" id="GO:0005737">
    <property type="term" value="C:cytoplasm"/>
    <property type="evidence" value="ECO:0007669"/>
    <property type="project" value="UniProtKB-SubCell"/>
</dbReference>
<dbReference type="GO" id="GO:0016151">
    <property type="term" value="F:nickel cation binding"/>
    <property type="evidence" value="ECO:0007669"/>
    <property type="project" value="UniProtKB-UniRule"/>
</dbReference>
<dbReference type="HAMAP" id="MF_01384">
    <property type="entry name" value="UreD"/>
    <property type="match status" value="1"/>
</dbReference>
<dbReference type="InterPro" id="IPR002669">
    <property type="entry name" value="UreD"/>
</dbReference>
<dbReference type="PANTHER" id="PTHR33643">
    <property type="entry name" value="UREASE ACCESSORY PROTEIN D"/>
    <property type="match status" value="1"/>
</dbReference>
<dbReference type="PANTHER" id="PTHR33643:SF1">
    <property type="entry name" value="UREASE ACCESSORY PROTEIN D"/>
    <property type="match status" value="1"/>
</dbReference>
<dbReference type="Pfam" id="PF01774">
    <property type="entry name" value="UreD"/>
    <property type="match status" value="1"/>
</dbReference>
<name>URED_BEII9</name>
<proteinExistence type="inferred from homology"/>
<protein>
    <recommendedName>
        <fullName evidence="1">Urease accessory protein UreD</fullName>
    </recommendedName>
</protein>
<reference key="1">
    <citation type="journal article" date="2010" name="J. Bacteriol.">
        <title>Complete genome sequence of Beijerinckia indica subsp. indica.</title>
        <authorList>
            <person name="Tamas I."/>
            <person name="Dedysh S.N."/>
            <person name="Liesack W."/>
            <person name="Stott M.B."/>
            <person name="Alam M."/>
            <person name="Murrell J.C."/>
            <person name="Dunfield P.F."/>
        </authorList>
    </citation>
    <scope>NUCLEOTIDE SEQUENCE [LARGE SCALE GENOMIC DNA]</scope>
    <source>
        <strain>ATCC 9039 / DSM 1715 / NCIMB 8712</strain>
    </source>
</reference>
<gene>
    <name evidence="1" type="primary">ureD</name>
    <name type="ordered locus">Bind_3308</name>
</gene>